<protein>
    <recommendedName>
        <fullName>Beta-insect excitatory toxin 2</fullName>
    </recommendedName>
    <alternativeName>
        <fullName evidence="5">AaH IT2</fullName>
        <shortName>AaHIT2</shortName>
        <shortName>AaIT2</shortName>
    </alternativeName>
</protein>
<feature type="signal peptide" evidence="7">
    <location>
        <begin position="1"/>
        <end position="18"/>
    </location>
</feature>
<feature type="chain" id="PRO_0000035188" description="Beta-insect excitatory toxin 2" evidence="3">
    <location>
        <begin position="19"/>
        <end position="88"/>
    </location>
</feature>
<feature type="domain" description="LCN-type CS-alpha/beta" evidence="2">
    <location>
        <begin position="20"/>
        <end position="83"/>
    </location>
</feature>
<feature type="disulfide bond" evidence="1">
    <location>
        <begin position="34"/>
        <end position="55"/>
    </location>
</feature>
<feature type="disulfide bond" evidence="1">
    <location>
        <begin position="40"/>
        <end position="60"/>
    </location>
</feature>
<feature type="disulfide bond" evidence="1">
    <location>
        <begin position="44"/>
        <end position="62"/>
    </location>
</feature>
<feature type="disulfide bond" evidence="1">
    <location>
        <begin position="56"/>
        <end position="82"/>
    </location>
</feature>
<feature type="sequence conflict" description="In Ref. 2; AA sequence." evidence="6" ref="2">
    <original>N</original>
    <variation>D</variation>
    <location>
        <position position="21"/>
    </location>
</feature>
<name>SIX2_ANDAU</name>
<dbReference type="EMBL" id="M27707">
    <property type="protein sequence ID" value="AAA29952.1"/>
    <property type="molecule type" value="mRNA"/>
</dbReference>
<dbReference type="PIR" id="G34444">
    <property type="entry name" value="G34444"/>
</dbReference>
<dbReference type="SMR" id="P15147"/>
<dbReference type="GO" id="GO:0005576">
    <property type="term" value="C:extracellular region"/>
    <property type="evidence" value="ECO:0007669"/>
    <property type="project" value="UniProtKB-SubCell"/>
</dbReference>
<dbReference type="GO" id="GO:0019871">
    <property type="term" value="F:sodium channel inhibitor activity"/>
    <property type="evidence" value="ECO:0007669"/>
    <property type="project" value="InterPro"/>
</dbReference>
<dbReference type="GO" id="GO:0090729">
    <property type="term" value="F:toxin activity"/>
    <property type="evidence" value="ECO:0007669"/>
    <property type="project" value="UniProtKB-KW"/>
</dbReference>
<dbReference type="GO" id="GO:0006952">
    <property type="term" value="P:defense response"/>
    <property type="evidence" value="ECO:0007669"/>
    <property type="project" value="InterPro"/>
</dbReference>
<dbReference type="CDD" id="cd23106">
    <property type="entry name" value="neurotoxins_LC_scorpion"/>
    <property type="match status" value="1"/>
</dbReference>
<dbReference type="Gene3D" id="3.30.30.10">
    <property type="entry name" value="Knottin, scorpion toxin-like"/>
    <property type="match status" value="1"/>
</dbReference>
<dbReference type="InterPro" id="IPR044062">
    <property type="entry name" value="LCN-type_CS_alpha_beta_dom"/>
</dbReference>
<dbReference type="InterPro" id="IPR003614">
    <property type="entry name" value="Scorpion_toxin-like"/>
</dbReference>
<dbReference type="InterPro" id="IPR036574">
    <property type="entry name" value="Scorpion_toxin-like_sf"/>
</dbReference>
<dbReference type="InterPro" id="IPR002061">
    <property type="entry name" value="Scorpion_toxinL/defensin"/>
</dbReference>
<dbReference type="Pfam" id="PF00537">
    <property type="entry name" value="Toxin_3"/>
    <property type="match status" value="1"/>
</dbReference>
<dbReference type="SMART" id="SM00505">
    <property type="entry name" value="Knot1"/>
    <property type="match status" value="1"/>
</dbReference>
<dbReference type="SUPFAM" id="SSF57095">
    <property type="entry name" value="Scorpion toxin-like"/>
    <property type="match status" value="1"/>
</dbReference>
<dbReference type="PROSITE" id="PS51863">
    <property type="entry name" value="LCN_CSAB"/>
    <property type="match status" value="1"/>
</dbReference>
<comment type="function">
    <text>Excitatory insect beta-toxins induce a spastic paralysis. They bind voltage-independently at site-4 of sodium channels (Nav) and shift the voltage of activation toward more negative potentials thereby affecting sodium channel activation and promoting spontaneous and repetitive firing. This toxin is active only on insects.</text>
</comment>
<comment type="subcellular location">
    <subcellularLocation>
        <location evidence="4">Secreted</location>
    </subcellularLocation>
</comment>
<comment type="tissue specificity">
    <text evidence="8">Expressed by the venom gland.</text>
</comment>
<comment type="domain">
    <text evidence="6">Has the structural arrangement of an alpha-helix connected to antiparallel beta-sheets by disulfide bonds (CS-alpha/beta).</text>
</comment>
<comment type="similarity">
    <text evidence="6">Belongs to the long (4 C-C) scorpion toxin superfamily. Sodium channel inhibitor family. Beta subfamily.</text>
</comment>
<proteinExistence type="evidence at protein level"/>
<organism>
    <name type="scientific">Androctonus australis</name>
    <name type="common">Sahara scorpion</name>
    <dbReference type="NCBI Taxonomy" id="6858"/>
    <lineage>
        <taxon>Eukaryota</taxon>
        <taxon>Metazoa</taxon>
        <taxon>Ecdysozoa</taxon>
        <taxon>Arthropoda</taxon>
        <taxon>Chelicerata</taxon>
        <taxon>Arachnida</taxon>
        <taxon>Scorpiones</taxon>
        <taxon>Buthida</taxon>
        <taxon>Buthoidea</taxon>
        <taxon>Buthidae</taxon>
        <taxon>Androctonus</taxon>
    </lineage>
</organism>
<evidence type="ECO:0000250" key="1">
    <source>
        <dbReference type="UniProtKB" id="P56637"/>
    </source>
</evidence>
<evidence type="ECO:0000255" key="2">
    <source>
        <dbReference type="PROSITE-ProRule" id="PRU01210"/>
    </source>
</evidence>
<evidence type="ECO:0000269" key="3">
    <source>
    </source>
</evidence>
<evidence type="ECO:0000269" key="4">
    <source>
    </source>
</evidence>
<evidence type="ECO:0000303" key="5">
    <source>
    </source>
</evidence>
<evidence type="ECO:0000305" key="6"/>
<evidence type="ECO:0000305" key="7">
    <source>
    </source>
</evidence>
<evidence type="ECO:0000305" key="8">
    <source>
    </source>
</evidence>
<sequence length="88" mass="9863">MKFLLLFLVVLPIMGVLGKKNGYAVDSSGKAPECLLSNYCYNECTKVHYADKGYCCLLSCYCFGLNDDKKVLEISDTRKSYCDTPIIN</sequence>
<keyword id="KW-0903">Direct protein sequencing</keyword>
<keyword id="KW-1015">Disulfide bond</keyword>
<keyword id="KW-0872">Ion channel impairing toxin</keyword>
<keyword id="KW-0528">Neurotoxin</keyword>
<keyword id="KW-0964">Secreted</keyword>
<keyword id="KW-0732">Signal</keyword>
<keyword id="KW-0800">Toxin</keyword>
<keyword id="KW-0738">Voltage-gated sodium channel impairing toxin</keyword>
<accession>P15147</accession>
<reference key="1">
    <citation type="journal article" date="1989" name="J. Biol. Chem.">
        <title>Precursors of Androctonus australis scorpion neurotoxins. Structures of precursors, processing outcomes, and expression of a functional recombinant toxin II.</title>
        <authorList>
            <person name="Bougis P.E."/>
            <person name="Rochat H."/>
            <person name="Smith L.A."/>
        </authorList>
    </citation>
    <scope>NUCLEOTIDE SEQUENCE [MRNA]</scope>
    <source>
        <strain>Hector</strain>
        <tissue>Venom gland</tissue>
    </source>
</reference>
<reference key="2">
    <citation type="journal article" date="1990" name="Biochemistry">
        <title>Neurotoxins active on insects: amino acid sequences, chemical modifications, and secondary structure estimation by circular dichroism of toxins from the scorpion Androctonus australis hector.</title>
        <authorList>
            <person name="Loret E.P."/>
            <person name="Mansuelle P."/>
            <person name="Rochat H."/>
            <person name="Granier C."/>
        </authorList>
    </citation>
    <scope>PROTEIN SEQUENCE OF 19-88</scope>
    <scope>SUBCELLULAR LOCATION</scope>
    <source>
        <strain>Hector</strain>
        <tissue>Venom</tissue>
    </source>
</reference>